<reference key="1">
    <citation type="journal article" date="2009" name="Appl. Environ. Microbiol.">
        <title>Rhizobium sp. strain NGR234 possesses a remarkable number of secretion systems.</title>
        <authorList>
            <person name="Schmeisser C."/>
            <person name="Liesegang H."/>
            <person name="Krysciak D."/>
            <person name="Bakkou N."/>
            <person name="Le Quere A."/>
            <person name="Wollherr A."/>
            <person name="Heinemeyer I."/>
            <person name="Morgenstern B."/>
            <person name="Pommerening-Roeser A."/>
            <person name="Flores M."/>
            <person name="Palacios R."/>
            <person name="Brenner S."/>
            <person name="Gottschalk G."/>
            <person name="Schmitz R.A."/>
            <person name="Broughton W.J."/>
            <person name="Perret X."/>
            <person name="Strittmatter A.W."/>
            <person name="Streit W.R."/>
        </authorList>
    </citation>
    <scope>NUCLEOTIDE SEQUENCE [LARGE SCALE GENOMIC DNA]</scope>
    <source>
        <strain>NBRC 101917 / NGR234</strain>
    </source>
</reference>
<gene>
    <name evidence="1" type="primary">pncB</name>
    <name type="ordered locus">NGR_c02120</name>
</gene>
<protein>
    <recommendedName>
        <fullName evidence="1">Nicotinate phosphoribosyltransferase</fullName>
        <shortName evidence="1">NAPRTase</shortName>
        <ecNumber evidence="1">6.3.4.21</ecNumber>
    </recommendedName>
</protein>
<sequence length="434" mass="49809">MPKTDIARRVYNHTWKLDPIIRSLLDTDFYKLLMLQMIWQLYPDVDATFSLINRTKTVRLAEEIDEQELRDQLDHARTLRFSKKEMIWLAGNTFYGRKQIFSPEFLSWLARFRLPEYELSRRDGQFELTFRGRWVETTMWEIPALAIINELRSRAAMKGLGPFTLDVLYARAKAKMWSKVEQLRQYPNLRISDFGTRRRHSFLWQRWCVEALKEGIGASFSGSSNVLLAMDNDLEALGTNAHELPMVAAALARNDKELAAAPYKVLQDWNQLYGGNLLIVLPDSFGTAAFLRNAPDWVADWTGFRPDSAPPVEGGEKILAWWKKKGRDPRDKLLIFSDGLDVDTIIKTYRHFEGRVRMSFGWGTNLTNDFAGCAPTEIGGLNPISIVCKVSEANGRPAVKLSDNPRKATGDPAEVERYLKFFGTEDFVEQTVRV</sequence>
<feature type="chain" id="PRO_1000191531" description="Nicotinate phosphoribosyltransferase">
    <location>
        <begin position="1"/>
        <end position="434"/>
    </location>
</feature>
<feature type="modified residue" description="Phosphohistidine; by autocatalysis" evidence="1">
    <location>
        <position position="242"/>
    </location>
</feature>
<organism>
    <name type="scientific">Sinorhizobium fredii (strain NBRC 101917 / NGR234)</name>
    <dbReference type="NCBI Taxonomy" id="394"/>
    <lineage>
        <taxon>Bacteria</taxon>
        <taxon>Pseudomonadati</taxon>
        <taxon>Pseudomonadota</taxon>
        <taxon>Alphaproteobacteria</taxon>
        <taxon>Hyphomicrobiales</taxon>
        <taxon>Rhizobiaceae</taxon>
        <taxon>Sinorhizobium/Ensifer group</taxon>
        <taxon>Sinorhizobium</taxon>
    </lineage>
</organism>
<comment type="function">
    <text evidence="1">Catalyzes the synthesis of beta-nicotinate D-ribonucleotide from nicotinate and 5-phospho-D-ribose 1-phosphate at the expense of ATP.</text>
</comment>
<comment type="catalytic activity">
    <reaction evidence="1">
        <text>nicotinate + 5-phospho-alpha-D-ribose 1-diphosphate + ATP + H2O = nicotinate beta-D-ribonucleotide + ADP + phosphate + diphosphate</text>
        <dbReference type="Rhea" id="RHEA:36163"/>
        <dbReference type="ChEBI" id="CHEBI:15377"/>
        <dbReference type="ChEBI" id="CHEBI:30616"/>
        <dbReference type="ChEBI" id="CHEBI:32544"/>
        <dbReference type="ChEBI" id="CHEBI:33019"/>
        <dbReference type="ChEBI" id="CHEBI:43474"/>
        <dbReference type="ChEBI" id="CHEBI:57502"/>
        <dbReference type="ChEBI" id="CHEBI:58017"/>
        <dbReference type="ChEBI" id="CHEBI:456216"/>
        <dbReference type="EC" id="6.3.4.21"/>
    </reaction>
</comment>
<comment type="pathway">
    <text evidence="1">Cofactor biosynthesis; NAD(+) biosynthesis; nicotinate D-ribonucleotide from nicotinate: step 1/1.</text>
</comment>
<comment type="PTM">
    <text evidence="1">Transiently phosphorylated on a His residue during the reaction cycle. Phosphorylation strongly increases the affinity for substrates and increases the rate of nicotinate D-ribonucleotide production. Dephosphorylation regenerates the low-affinity form of the enzyme, leading to product release.</text>
</comment>
<comment type="similarity">
    <text evidence="1">Belongs to the NAPRTase family.</text>
</comment>
<dbReference type="EC" id="6.3.4.21" evidence="1"/>
<dbReference type="EMBL" id="CP001389">
    <property type="protein sequence ID" value="ACP24012.1"/>
    <property type="molecule type" value="Genomic_DNA"/>
</dbReference>
<dbReference type="RefSeq" id="WP_012706797.1">
    <property type="nucleotide sequence ID" value="NC_012587.1"/>
</dbReference>
<dbReference type="RefSeq" id="YP_002824765.1">
    <property type="nucleotide sequence ID" value="NC_012587.1"/>
</dbReference>
<dbReference type="SMR" id="C3MFW1"/>
<dbReference type="STRING" id="394.NGR_c02120"/>
<dbReference type="KEGG" id="rhi:NGR_c02120"/>
<dbReference type="PATRIC" id="fig|394.7.peg.3012"/>
<dbReference type="eggNOG" id="COG1488">
    <property type="taxonomic scope" value="Bacteria"/>
</dbReference>
<dbReference type="HOGENOM" id="CLU_030991_1_0_5"/>
<dbReference type="OrthoDB" id="9771406at2"/>
<dbReference type="UniPathway" id="UPA00253">
    <property type="reaction ID" value="UER00457"/>
</dbReference>
<dbReference type="Proteomes" id="UP000001054">
    <property type="component" value="Chromosome"/>
</dbReference>
<dbReference type="GO" id="GO:0005829">
    <property type="term" value="C:cytosol"/>
    <property type="evidence" value="ECO:0007669"/>
    <property type="project" value="TreeGrafter"/>
</dbReference>
<dbReference type="GO" id="GO:0004516">
    <property type="term" value="F:nicotinate phosphoribosyltransferase activity"/>
    <property type="evidence" value="ECO:0007669"/>
    <property type="project" value="UniProtKB-UniRule"/>
</dbReference>
<dbReference type="GO" id="GO:0034355">
    <property type="term" value="P:NAD biosynthetic process via the salvage pathway"/>
    <property type="evidence" value="ECO:0007669"/>
    <property type="project" value="TreeGrafter"/>
</dbReference>
<dbReference type="Gene3D" id="3.20.140.10">
    <property type="entry name" value="nicotinate phosphoribosyltransferase"/>
    <property type="match status" value="1"/>
</dbReference>
<dbReference type="HAMAP" id="MF_00570">
    <property type="entry name" value="NAPRTase"/>
    <property type="match status" value="1"/>
</dbReference>
<dbReference type="InterPro" id="IPR041525">
    <property type="entry name" value="N/Namide_PRibTrfase"/>
</dbReference>
<dbReference type="InterPro" id="IPR040727">
    <property type="entry name" value="NAPRTase_N"/>
</dbReference>
<dbReference type="InterPro" id="IPR006406">
    <property type="entry name" value="Nic_PRibTrfase"/>
</dbReference>
<dbReference type="InterPro" id="IPR007229">
    <property type="entry name" value="Nic_PRibTrfase-Fam"/>
</dbReference>
<dbReference type="InterPro" id="IPR036068">
    <property type="entry name" value="Nicotinate_pribotase-like_C"/>
</dbReference>
<dbReference type="NCBIfam" id="TIGR01514">
    <property type="entry name" value="NAPRTase"/>
    <property type="match status" value="1"/>
</dbReference>
<dbReference type="NCBIfam" id="NF003704">
    <property type="entry name" value="PRK05321.1"/>
    <property type="match status" value="1"/>
</dbReference>
<dbReference type="PANTHER" id="PTHR11098">
    <property type="entry name" value="NICOTINATE PHOSPHORIBOSYLTRANSFERASE"/>
    <property type="match status" value="1"/>
</dbReference>
<dbReference type="PANTHER" id="PTHR11098:SF1">
    <property type="entry name" value="NICOTINATE PHOSPHORIBOSYLTRANSFERASE"/>
    <property type="match status" value="1"/>
</dbReference>
<dbReference type="Pfam" id="PF04095">
    <property type="entry name" value="NAPRTase"/>
    <property type="match status" value="1"/>
</dbReference>
<dbReference type="Pfam" id="PF17767">
    <property type="entry name" value="NAPRTase_N"/>
    <property type="match status" value="1"/>
</dbReference>
<dbReference type="PIRSF" id="PIRSF000484">
    <property type="entry name" value="NAPRT"/>
    <property type="match status" value="1"/>
</dbReference>
<dbReference type="SUPFAM" id="SSF51690">
    <property type="entry name" value="Nicotinate/Quinolinate PRTase C-terminal domain-like"/>
    <property type="match status" value="1"/>
</dbReference>
<dbReference type="SUPFAM" id="SSF54675">
    <property type="entry name" value="Nicotinate/Quinolinate PRTase N-terminal domain-like"/>
    <property type="match status" value="1"/>
</dbReference>
<evidence type="ECO:0000255" key="1">
    <source>
        <dbReference type="HAMAP-Rule" id="MF_00570"/>
    </source>
</evidence>
<accession>C3MFW1</accession>
<name>PNCB_SINFN</name>
<proteinExistence type="inferred from homology"/>
<keyword id="KW-0436">Ligase</keyword>
<keyword id="KW-0597">Phosphoprotein</keyword>
<keyword id="KW-0662">Pyridine nucleotide biosynthesis</keyword>
<keyword id="KW-1185">Reference proteome</keyword>